<keyword id="KW-1185">Reference proteome</keyword>
<sequence>MAQAAQINVLDISTRLRVEHDKKRRQFSIRLNGSHDKAVLLYEYVGKKTVDLQHTEVPEAYRGREIAKHLAKAAMDFVVEEDLKAHLTCWYIQKFVKENPHPQYLERILH</sequence>
<protein>
    <recommendedName>
        <fullName>Protein NATD1</fullName>
    </recommendedName>
    <alternativeName>
        <fullName>N-acetyltransferase domain-containing protein 1</fullName>
    </alternativeName>
</protein>
<proteinExistence type="inferred from homology"/>
<gene>
    <name type="primary">natd1</name>
    <name type="synonym">gtlf3b</name>
    <name type="ORF">zgc:110779</name>
</gene>
<dbReference type="EMBL" id="BC090291">
    <property type="protein sequence ID" value="AAH90291.1"/>
    <property type="molecule type" value="mRNA"/>
</dbReference>
<dbReference type="RefSeq" id="NP_001013336.1">
    <property type="nucleotide sequence ID" value="NM_001013318.1"/>
</dbReference>
<dbReference type="SMR" id="Q5D014"/>
<dbReference type="FunCoup" id="Q5D014">
    <property type="interactions" value="5"/>
</dbReference>
<dbReference type="STRING" id="7955.ENSDARP00000055786"/>
<dbReference type="PaxDb" id="7955-ENSDARP00000055786"/>
<dbReference type="Ensembl" id="ENSDART00000055787">
    <property type="protein sequence ID" value="ENSDARP00000055786"/>
    <property type="gene ID" value="ENSDARG00000038281"/>
</dbReference>
<dbReference type="GeneID" id="100002945"/>
<dbReference type="KEGG" id="dre:100002945"/>
<dbReference type="AGR" id="ZFIN:ZDB-GENE-050306-19"/>
<dbReference type="CTD" id="256302"/>
<dbReference type="ZFIN" id="ZDB-GENE-050306-19">
    <property type="gene designation" value="natd1"/>
</dbReference>
<dbReference type="eggNOG" id="ENOG502S2NM">
    <property type="taxonomic scope" value="Eukaryota"/>
</dbReference>
<dbReference type="HOGENOM" id="CLU_132888_1_1_1"/>
<dbReference type="InParanoid" id="Q5D014"/>
<dbReference type="OMA" id="EIMTITH"/>
<dbReference type="OrthoDB" id="74247at2759"/>
<dbReference type="PhylomeDB" id="Q5D014"/>
<dbReference type="TreeFam" id="TF314063"/>
<dbReference type="PRO" id="PR:Q5D014"/>
<dbReference type="Proteomes" id="UP000000437">
    <property type="component" value="Chromosome 3"/>
</dbReference>
<dbReference type="Bgee" id="ENSDARG00000038281">
    <property type="expression patterns" value="Expressed in swim bladder and 26 other cell types or tissues"/>
</dbReference>
<dbReference type="FunFam" id="3.40.630.30:FF:000030">
    <property type="entry name" value="NATD1 isoform 1"/>
    <property type="match status" value="1"/>
</dbReference>
<dbReference type="Gene3D" id="3.40.630.30">
    <property type="match status" value="1"/>
</dbReference>
<dbReference type="InterPro" id="IPR016181">
    <property type="entry name" value="Acyl_CoA_acyltransferase"/>
</dbReference>
<dbReference type="InterPro" id="IPR045057">
    <property type="entry name" value="Gcn5-rel_NAT"/>
</dbReference>
<dbReference type="InterPro" id="IPR031165">
    <property type="entry name" value="GNAT_YJDJ"/>
</dbReference>
<dbReference type="PANTHER" id="PTHR31435">
    <property type="entry name" value="PROTEIN NATD1"/>
    <property type="match status" value="1"/>
</dbReference>
<dbReference type="PANTHER" id="PTHR31435:SF9">
    <property type="entry name" value="PROTEIN NATD1"/>
    <property type="match status" value="1"/>
</dbReference>
<dbReference type="Pfam" id="PF14542">
    <property type="entry name" value="Acetyltransf_CG"/>
    <property type="match status" value="1"/>
</dbReference>
<dbReference type="SUPFAM" id="SSF55729">
    <property type="entry name" value="Acyl-CoA N-acyltransferases (Nat)"/>
    <property type="match status" value="1"/>
</dbReference>
<dbReference type="PROSITE" id="PS51729">
    <property type="entry name" value="GNAT_YJDJ"/>
    <property type="match status" value="1"/>
</dbReference>
<name>NATD1_DANRE</name>
<evidence type="ECO:0000255" key="1">
    <source>
        <dbReference type="PROSITE-ProRule" id="PRU00532"/>
    </source>
</evidence>
<evidence type="ECO:0000305" key="2"/>
<accession>Q5D014</accession>
<comment type="similarity">
    <text evidence="2">Belongs to the NATD1 family.</text>
</comment>
<feature type="chain" id="PRO_0000320659" description="Protein NATD1">
    <location>
        <begin position="1"/>
        <end position="110"/>
    </location>
</feature>
<feature type="domain" description="N-acetyltransferase" evidence="1">
    <location>
        <begin position="19"/>
        <end position="109"/>
    </location>
</feature>
<reference key="1">
    <citation type="submission" date="2005-02" db="EMBL/GenBank/DDBJ databases">
        <authorList>
            <consortium name="NIH - Zebrafish Gene Collection (ZGC) project"/>
        </authorList>
    </citation>
    <scope>NUCLEOTIDE SEQUENCE [LARGE SCALE MRNA]</scope>
    <source>
        <tissue>Embryo</tissue>
    </source>
</reference>
<organism>
    <name type="scientific">Danio rerio</name>
    <name type="common">Zebrafish</name>
    <name type="synonym">Brachydanio rerio</name>
    <dbReference type="NCBI Taxonomy" id="7955"/>
    <lineage>
        <taxon>Eukaryota</taxon>
        <taxon>Metazoa</taxon>
        <taxon>Chordata</taxon>
        <taxon>Craniata</taxon>
        <taxon>Vertebrata</taxon>
        <taxon>Euteleostomi</taxon>
        <taxon>Actinopterygii</taxon>
        <taxon>Neopterygii</taxon>
        <taxon>Teleostei</taxon>
        <taxon>Ostariophysi</taxon>
        <taxon>Cypriniformes</taxon>
        <taxon>Danionidae</taxon>
        <taxon>Danioninae</taxon>
        <taxon>Danio</taxon>
    </lineage>
</organism>